<feature type="chain" id="PRO_0000200081" description="Homeobox protein Hox-A9">
    <location>
        <begin position="1"/>
        <end position="272"/>
    </location>
</feature>
<feature type="DNA-binding region" description="Homeobox" evidence="2">
    <location>
        <begin position="206"/>
        <end position="265"/>
    </location>
</feature>
<feature type="region of interest" description="Disordered" evidence="3">
    <location>
        <begin position="155"/>
        <end position="198"/>
    </location>
</feature>
<feature type="site" description="Breakpoint for translocation to form MSI2/HOXA9 fusion protein">
    <location>
        <begin position="163"/>
        <end position="164"/>
    </location>
</feature>
<feature type="site" description="Breakpoint for translocation to form the NUP98-HOXA9 fusion protein" evidence="7">
    <location>
        <begin position="163"/>
        <end position="164"/>
    </location>
</feature>
<feature type="modified residue" description="Symmetric dimethylarginine" evidence="5">
    <location>
        <position position="140"/>
    </location>
</feature>
<feature type="mutagenesis site" description="Results in loss of methylation." evidence="5">
    <original>R</original>
    <variation>A</variation>
    <location>
        <position position="140"/>
    </location>
</feature>
<feature type="sequence conflict" description="In Ref. 1; AAB40867." evidence="8" ref="1">
    <original>G</original>
    <variation>V</variation>
    <location>
        <position position="64"/>
    </location>
</feature>
<feature type="sequence conflict" description="In Ref. 2; AAD08713." evidence="8" ref="2">
    <original>W</original>
    <variation>R</variation>
    <location>
        <position position="67"/>
    </location>
</feature>
<feature type="sequence conflict" description="In Ref. 1; AAB40867." evidence="8" ref="1">
    <location>
        <position position="80"/>
    </location>
</feature>
<feature type="sequence conflict" description="In Ref. 1; AAB40867." evidence="8" ref="1">
    <original>L</original>
    <variation>F</variation>
    <location>
        <position position="243"/>
    </location>
</feature>
<sequence length="272" mass="30172">MATTGALGNYYVDSFLLGADAADELSVGRYAPGTLGQPPRQAATLAEHPDFSPCSFQSKATVFGASWNPVHAAGANAVPAAVYHHHHHHPYVHPQAPVAAAAPDGRYMRSWLEPTPGALSFAGLPSSRPYGIKPEPLSARRGDCPTLDTHTLSLTDYACGSPPVDREKQPSEGAFSENNAENESGGDKPPIDPNNPAANWLHARSTRKKRCPYTKHQTLELEKEFLFNMYLTRDRRYEVARLLNLTERQVKIWFQNRRMKMKKINKDRAKDE</sequence>
<gene>
    <name type="primary">HOXA9</name>
    <name type="synonym">HOX1G</name>
</gene>
<protein>
    <recommendedName>
        <fullName>Homeobox protein Hox-A9</fullName>
    </recommendedName>
    <alternativeName>
        <fullName>Homeobox protein Hox-1G</fullName>
    </alternativeName>
</protein>
<proteinExistence type="evidence at protein level"/>
<comment type="function">
    <text evidence="1 5">Sequence-specific transcription factor which is part of a developmental regulatory system that provides cells with specific positional identities on the anterior-posterior axis. Required for induction of SELE/E-selectin and VCAM1 on the endothelial cells surface at sites of inflammation (PubMed:22269951). Positively regulates EIF4E-mediated mRNA nuclear export and also increases the translation efficiency of ODC mRNA in the cytoplasm by competing with factors which repress EIF4E activity such as PRH (By similarity).</text>
</comment>
<comment type="subunit">
    <text evidence="1 5">Transiently interacts with PRMT5 in TNF-alpha stimulated endothelial cells (PubMed:22269951). Interacts with EIF4E (By similarity).</text>
</comment>
<comment type="interaction">
    <interactant intactId="EBI-742314">
        <id>P31269</id>
    </interactant>
    <interactant intactId="EBI-1043191">
        <id>Q9BYQ3</id>
        <label>KRTAP9-3</label>
    </interactant>
    <organismsDiffer>false</organismsDiffer>
    <experiments>3</experiments>
</comment>
<comment type="interaction">
    <interactant intactId="EBI-742314">
        <id>P31269</id>
    </interactant>
    <interactant intactId="EBI-351098">
        <id>O14744</id>
        <label>PRMT5</label>
    </interactant>
    <organismsDiffer>false</organismsDiffer>
    <experiments>4</experiments>
</comment>
<comment type="interaction">
    <interactant intactId="EBI-742314">
        <id>P31269</id>
    </interactant>
    <interactant intactId="EBI-742327">
        <id>Q15654</id>
        <label>TRIP6</label>
    </interactant>
    <organismsDiffer>false</organismsDiffer>
    <experiments>6</experiments>
</comment>
<comment type="subcellular location">
    <subcellularLocation>
        <location evidence="4">Nucleus</location>
    </subcellularLocation>
    <subcellularLocation>
        <location evidence="4">Cytoplasm</location>
    </subcellularLocation>
</comment>
<comment type="PTM">
    <text evidence="5">Methylated on Arg-140 by PRMT5; methylation is critical for E-selectin induction.</text>
</comment>
<comment type="disease">
    <text evidence="6 7">A chromosomal aberration involving HOXA9 is found in a form of acute myeloid leukemia. Translocation t(7;11)(p15;p15) with NUP98 (PubMed:8563753). The chimera includes NUP98 intrinsic disordered regions which contribute to aberrant liquid-liquid phase separation puncta of the chimera in the nucleus. This phase-separation enhances the chimera genomic targeting and induces organization of aberrant three-dimensional chromatin structures leading to tumourous transformation (PubMed:34163069).</text>
</comment>
<comment type="disease">
    <text>A chromosomal aberration involving HOXA9 may contribute to disease progression in chronic myeloid leukemia. Translocation t(7;17)(p15;q23) with MSI2.</text>
</comment>
<comment type="similarity">
    <text evidence="8">Belongs to the Abd-B homeobox family.</text>
</comment>
<comment type="sequence caution" evidence="8">
    <conflict type="erroneous initiation">
        <sequence resource="EMBL-CDS" id="AAC50364"/>
    </conflict>
</comment>
<comment type="online information" name="Atlas of Genetics and Cytogenetics in Oncology and Haematology">
    <link uri="https://atlasgeneticsoncology.org/gene/61/HOXA9"/>
</comment>
<evidence type="ECO:0000250" key="1">
    <source>
        <dbReference type="UniProtKB" id="P09631"/>
    </source>
</evidence>
<evidence type="ECO:0000255" key="2">
    <source>
        <dbReference type="PROSITE-ProRule" id="PRU00108"/>
    </source>
</evidence>
<evidence type="ECO:0000256" key="3">
    <source>
        <dbReference type="SAM" id="MobiDB-lite"/>
    </source>
</evidence>
<evidence type="ECO:0000269" key="4">
    <source>
    </source>
</evidence>
<evidence type="ECO:0000269" key="5">
    <source>
    </source>
</evidence>
<evidence type="ECO:0000269" key="6">
    <source>
    </source>
</evidence>
<evidence type="ECO:0000269" key="7">
    <source>
    </source>
</evidence>
<evidence type="ECO:0000305" key="8"/>
<name>HXA9_HUMAN</name>
<accession>P31269</accession>
<accession>O43369</accession>
<accession>O43429</accession>
<accession>Q99820</accession>
<dbReference type="EMBL" id="U82759">
    <property type="protein sequence ID" value="AAB40867.1"/>
    <property type="molecule type" value="mRNA"/>
</dbReference>
<dbReference type="EMBL" id="AF010258">
    <property type="protein sequence ID" value="AAD08713.1"/>
    <property type="molecule type" value="Genomic_DNA"/>
</dbReference>
<dbReference type="EMBL" id="BT006990">
    <property type="protein sequence ID" value="AAP35636.1"/>
    <property type="molecule type" value="mRNA"/>
</dbReference>
<dbReference type="EMBL" id="AC004080">
    <property type="status" value="NOT_ANNOTATED_CDS"/>
    <property type="molecule type" value="Genomic_DNA"/>
</dbReference>
<dbReference type="EMBL" id="BC006537">
    <property type="protein sequence ID" value="AAH06537.1"/>
    <property type="molecule type" value="mRNA"/>
</dbReference>
<dbReference type="EMBL" id="BC010023">
    <property type="protein sequence ID" value="AAH10023.1"/>
    <property type="molecule type" value="mRNA"/>
</dbReference>
<dbReference type="EMBL" id="U41813">
    <property type="protein sequence ID" value="AAC50364.1"/>
    <property type="status" value="ALT_INIT"/>
    <property type="molecule type" value="mRNA"/>
</dbReference>
<dbReference type="CCDS" id="CCDS5409.1"/>
<dbReference type="PIR" id="S14929">
    <property type="entry name" value="S14929"/>
</dbReference>
<dbReference type="RefSeq" id="NP_689952.1">
    <property type="nucleotide sequence ID" value="NM_152739.4"/>
</dbReference>
<dbReference type="SMR" id="P31269"/>
<dbReference type="BioGRID" id="109445">
    <property type="interactions" value="31"/>
</dbReference>
<dbReference type="CORUM" id="P31269"/>
<dbReference type="FunCoup" id="P31269">
    <property type="interactions" value="1058"/>
</dbReference>
<dbReference type="IntAct" id="P31269">
    <property type="interactions" value="15"/>
</dbReference>
<dbReference type="MINT" id="P31269"/>
<dbReference type="STRING" id="9606.ENSP00000343619"/>
<dbReference type="GlyGen" id="P31269">
    <property type="glycosylation" value="2 sites, 1 O-linked glycan (1 site)"/>
</dbReference>
<dbReference type="iPTMnet" id="P31269"/>
<dbReference type="PhosphoSitePlus" id="P31269"/>
<dbReference type="BioMuta" id="HOXA9"/>
<dbReference type="DMDM" id="6166219"/>
<dbReference type="jPOST" id="P31269"/>
<dbReference type="MassIVE" id="P31269"/>
<dbReference type="PaxDb" id="9606-ENSP00000343619"/>
<dbReference type="PeptideAtlas" id="P31269"/>
<dbReference type="ProteomicsDB" id="54770"/>
<dbReference type="Pumba" id="P31269"/>
<dbReference type="Antibodypedia" id="12395">
    <property type="antibodies" value="348 antibodies from 39 providers"/>
</dbReference>
<dbReference type="DNASU" id="3205"/>
<dbReference type="Ensembl" id="ENST00000343483.7">
    <property type="protein sequence ID" value="ENSP00000343619.6"/>
    <property type="gene ID" value="ENSG00000078399.19"/>
</dbReference>
<dbReference type="GeneID" id="3205"/>
<dbReference type="KEGG" id="hsa:3205"/>
<dbReference type="MANE-Select" id="ENST00000343483.7">
    <property type="protein sequence ID" value="ENSP00000343619.6"/>
    <property type="RefSeq nucleotide sequence ID" value="NM_152739.4"/>
    <property type="RefSeq protein sequence ID" value="NP_689952.1"/>
</dbReference>
<dbReference type="UCSC" id="uc003syt.4">
    <property type="organism name" value="human"/>
</dbReference>
<dbReference type="AGR" id="HGNC:5109"/>
<dbReference type="CTD" id="3205"/>
<dbReference type="DisGeNET" id="3205"/>
<dbReference type="GeneCards" id="HOXA9"/>
<dbReference type="HGNC" id="HGNC:5109">
    <property type="gene designation" value="HOXA9"/>
</dbReference>
<dbReference type="HPA" id="ENSG00000078399">
    <property type="expression patterns" value="Tissue enhanced (kidney, skin)"/>
</dbReference>
<dbReference type="MalaCards" id="HOXA9"/>
<dbReference type="MIM" id="142956">
    <property type="type" value="gene"/>
</dbReference>
<dbReference type="neXtProt" id="NX_P31269"/>
<dbReference type="OpenTargets" id="ENSG00000078399"/>
<dbReference type="PharmGKB" id="PA29386"/>
<dbReference type="VEuPathDB" id="HostDB:ENSG00000078399"/>
<dbReference type="eggNOG" id="KOG0487">
    <property type="taxonomic scope" value="Eukaryota"/>
</dbReference>
<dbReference type="GeneTree" id="ENSGT00940000161864"/>
<dbReference type="HOGENOM" id="CLU_071854_0_0_1"/>
<dbReference type="InParanoid" id="P31269"/>
<dbReference type="OMA" id="GEHPEFT"/>
<dbReference type="OrthoDB" id="6159439at2759"/>
<dbReference type="PAN-GO" id="P31269">
    <property type="GO annotations" value="7 GO annotations based on evolutionary models"/>
</dbReference>
<dbReference type="PhylomeDB" id="P31269"/>
<dbReference type="TreeFam" id="TF317819"/>
<dbReference type="PathwayCommons" id="P31269"/>
<dbReference type="SignaLink" id="P31269"/>
<dbReference type="SIGNOR" id="P31269"/>
<dbReference type="BioGRID-ORCS" id="3205">
    <property type="hits" value="39 hits in 1176 CRISPR screens"/>
</dbReference>
<dbReference type="GeneWiki" id="HOXA9"/>
<dbReference type="GenomeRNAi" id="3205"/>
<dbReference type="Pharos" id="P31269">
    <property type="development level" value="Tbio"/>
</dbReference>
<dbReference type="PRO" id="PR:P31269"/>
<dbReference type="Proteomes" id="UP000005640">
    <property type="component" value="Chromosome 7"/>
</dbReference>
<dbReference type="RNAct" id="P31269">
    <property type="molecule type" value="protein"/>
</dbReference>
<dbReference type="Bgee" id="ENSG00000078399">
    <property type="expression patterns" value="Expressed in male germ line stem cell (sensu Vertebrata) in testis and 148 other cell types or tissues"/>
</dbReference>
<dbReference type="ExpressionAtlas" id="P31269">
    <property type="expression patterns" value="baseline and differential"/>
</dbReference>
<dbReference type="GO" id="GO:0000785">
    <property type="term" value="C:chromatin"/>
    <property type="evidence" value="ECO:0000247"/>
    <property type="project" value="NTNU_SB"/>
</dbReference>
<dbReference type="GO" id="GO:0005737">
    <property type="term" value="C:cytoplasm"/>
    <property type="evidence" value="ECO:0007669"/>
    <property type="project" value="UniProtKB-SubCell"/>
</dbReference>
<dbReference type="GO" id="GO:0005654">
    <property type="term" value="C:nucleoplasm"/>
    <property type="evidence" value="ECO:0000314"/>
    <property type="project" value="HPA"/>
</dbReference>
<dbReference type="GO" id="GO:0005634">
    <property type="term" value="C:nucleus"/>
    <property type="evidence" value="ECO:0000314"/>
    <property type="project" value="LIFEdb"/>
</dbReference>
<dbReference type="GO" id="GO:0005667">
    <property type="term" value="C:transcription regulator complex"/>
    <property type="evidence" value="ECO:0007669"/>
    <property type="project" value="Ensembl"/>
</dbReference>
<dbReference type="GO" id="GO:0001228">
    <property type="term" value="F:DNA-binding transcription activator activity, RNA polymerase II-specific"/>
    <property type="evidence" value="ECO:0007669"/>
    <property type="project" value="Ensembl"/>
</dbReference>
<dbReference type="GO" id="GO:0003700">
    <property type="term" value="F:DNA-binding transcription factor activity"/>
    <property type="evidence" value="ECO:0000318"/>
    <property type="project" value="GO_Central"/>
</dbReference>
<dbReference type="GO" id="GO:0000981">
    <property type="term" value="F:DNA-binding transcription factor activity, RNA polymerase II-specific"/>
    <property type="evidence" value="ECO:0000247"/>
    <property type="project" value="NTNU_SB"/>
</dbReference>
<dbReference type="GO" id="GO:0019899">
    <property type="term" value="F:enzyme binding"/>
    <property type="evidence" value="ECO:0000353"/>
    <property type="project" value="UniProtKB"/>
</dbReference>
<dbReference type="GO" id="GO:0000978">
    <property type="term" value="F:RNA polymerase II cis-regulatory region sequence-specific DNA binding"/>
    <property type="evidence" value="ECO:0000318"/>
    <property type="project" value="GO_Central"/>
</dbReference>
<dbReference type="GO" id="GO:1990837">
    <property type="term" value="F:sequence-specific double-stranded DNA binding"/>
    <property type="evidence" value="ECO:0000314"/>
    <property type="project" value="ARUK-UCL"/>
</dbReference>
<dbReference type="GO" id="GO:0009952">
    <property type="term" value="P:anterior/posterior pattern specification"/>
    <property type="evidence" value="ECO:0000318"/>
    <property type="project" value="GO_Central"/>
</dbReference>
<dbReference type="GO" id="GO:0060216">
    <property type="term" value="P:definitive hemopoiesis"/>
    <property type="evidence" value="ECO:0007669"/>
    <property type="project" value="Ensembl"/>
</dbReference>
<dbReference type="GO" id="GO:0006351">
    <property type="term" value="P:DNA-templated transcription"/>
    <property type="evidence" value="ECO:0007669"/>
    <property type="project" value="InterPro"/>
</dbReference>
<dbReference type="GO" id="GO:0035115">
    <property type="term" value="P:embryonic forelimb morphogenesis"/>
    <property type="evidence" value="ECO:0007669"/>
    <property type="project" value="Ensembl"/>
</dbReference>
<dbReference type="GO" id="GO:0048704">
    <property type="term" value="P:embryonic skeletal system morphogenesis"/>
    <property type="evidence" value="ECO:0000318"/>
    <property type="project" value="GO_Central"/>
</dbReference>
<dbReference type="GO" id="GO:0042118">
    <property type="term" value="P:endothelial cell activation"/>
    <property type="evidence" value="ECO:0000315"/>
    <property type="project" value="UniProtKB"/>
</dbReference>
<dbReference type="GO" id="GO:0008584">
    <property type="term" value="P:male gonad development"/>
    <property type="evidence" value="ECO:0007669"/>
    <property type="project" value="Ensembl"/>
</dbReference>
<dbReference type="GO" id="GO:0030879">
    <property type="term" value="P:mammary gland development"/>
    <property type="evidence" value="ECO:0007669"/>
    <property type="project" value="Ensembl"/>
</dbReference>
<dbReference type="GO" id="GO:0045638">
    <property type="term" value="P:negative regulation of myeloid cell differentiation"/>
    <property type="evidence" value="ECO:0000250"/>
    <property type="project" value="UniProtKB"/>
</dbReference>
<dbReference type="GO" id="GO:0030850">
    <property type="term" value="P:prostate gland development"/>
    <property type="evidence" value="ECO:0007669"/>
    <property type="project" value="Ensembl"/>
</dbReference>
<dbReference type="GO" id="GO:0009954">
    <property type="term" value="P:proximal/distal pattern formation"/>
    <property type="evidence" value="ECO:0000318"/>
    <property type="project" value="GO_Central"/>
</dbReference>
<dbReference type="GO" id="GO:0006357">
    <property type="term" value="P:regulation of transcription by RNA polymerase II"/>
    <property type="evidence" value="ECO:0000318"/>
    <property type="project" value="GO_Central"/>
</dbReference>
<dbReference type="GO" id="GO:0033574">
    <property type="term" value="P:response to testosterone"/>
    <property type="evidence" value="ECO:0007669"/>
    <property type="project" value="Ensembl"/>
</dbReference>
<dbReference type="GO" id="GO:0007338">
    <property type="term" value="P:single fertilization"/>
    <property type="evidence" value="ECO:0007669"/>
    <property type="project" value="Ensembl"/>
</dbReference>
<dbReference type="GO" id="GO:0007283">
    <property type="term" value="P:spermatogenesis"/>
    <property type="evidence" value="ECO:0007669"/>
    <property type="project" value="Ensembl"/>
</dbReference>
<dbReference type="GO" id="GO:0060065">
    <property type="term" value="P:uterus development"/>
    <property type="evidence" value="ECO:0007669"/>
    <property type="project" value="Ensembl"/>
</dbReference>
<dbReference type="CDD" id="cd00086">
    <property type="entry name" value="homeodomain"/>
    <property type="match status" value="1"/>
</dbReference>
<dbReference type="FunFam" id="1.10.10.60:FF:000018">
    <property type="entry name" value="Homeobox A10"/>
    <property type="match status" value="1"/>
</dbReference>
<dbReference type="Gene3D" id="1.10.10.60">
    <property type="entry name" value="Homeodomain-like"/>
    <property type="match status" value="1"/>
</dbReference>
<dbReference type="InterPro" id="IPR050803">
    <property type="entry name" value="Abd-B_homeobox_TF"/>
</dbReference>
<dbReference type="InterPro" id="IPR001356">
    <property type="entry name" value="HD"/>
</dbReference>
<dbReference type="InterPro" id="IPR020479">
    <property type="entry name" value="HD_metazoa"/>
</dbReference>
<dbReference type="InterPro" id="IPR017970">
    <property type="entry name" value="Homeobox_CS"/>
</dbReference>
<dbReference type="InterPro" id="IPR009057">
    <property type="entry name" value="Homeodomain-like_sf"/>
</dbReference>
<dbReference type="InterPro" id="IPR006711">
    <property type="entry name" value="Hox9_activation_N"/>
</dbReference>
<dbReference type="InterPro" id="IPR017112">
    <property type="entry name" value="HXA9/HXB9/HXC9"/>
</dbReference>
<dbReference type="PANTHER" id="PTHR45970">
    <property type="entry name" value="AGAP004664-PA"/>
    <property type="match status" value="1"/>
</dbReference>
<dbReference type="PANTHER" id="PTHR45970:SF3">
    <property type="entry name" value="HOMEOBOX PROTEIN HOX-A9"/>
    <property type="match status" value="1"/>
</dbReference>
<dbReference type="Pfam" id="PF00046">
    <property type="entry name" value="Homeodomain"/>
    <property type="match status" value="1"/>
</dbReference>
<dbReference type="Pfam" id="PF04617">
    <property type="entry name" value="Hox9_act"/>
    <property type="match status" value="1"/>
</dbReference>
<dbReference type="PIRSF" id="PIRSF037109">
    <property type="entry name" value="Homeobox_Hox9"/>
    <property type="match status" value="1"/>
</dbReference>
<dbReference type="PRINTS" id="PR00024">
    <property type="entry name" value="HOMEOBOX"/>
</dbReference>
<dbReference type="SMART" id="SM00389">
    <property type="entry name" value="HOX"/>
    <property type="match status" value="1"/>
</dbReference>
<dbReference type="SUPFAM" id="SSF46689">
    <property type="entry name" value="Homeodomain-like"/>
    <property type="match status" value="1"/>
</dbReference>
<dbReference type="PROSITE" id="PS00027">
    <property type="entry name" value="HOMEOBOX_1"/>
    <property type="match status" value="1"/>
</dbReference>
<dbReference type="PROSITE" id="PS50071">
    <property type="entry name" value="HOMEOBOX_2"/>
    <property type="match status" value="1"/>
</dbReference>
<organism>
    <name type="scientific">Homo sapiens</name>
    <name type="common">Human</name>
    <dbReference type="NCBI Taxonomy" id="9606"/>
    <lineage>
        <taxon>Eukaryota</taxon>
        <taxon>Metazoa</taxon>
        <taxon>Chordata</taxon>
        <taxon>Craniata</taxon>
        <taxon>Vertebrata</taxon>
        <taxon>Euteleostomi</taxon>
        <taxon>Mammalia</taxon>
        <taxon>Eutheria</taxon>
        <taxon>Euarchontoglires</taxon>
        <taxon>Primates</taxon>
        <taxon>Haplorrhini</taxon>
        <taxon>Catarrhini</taxon>
        <taxon>Hominidae</taxon>
        <taxon>Homo</taxon>
    </lineage>
</organism>
<keyword id="KW-0160">Chromosomal rearrangement</keyword>
<keyword id="KW-0963">Cytoplasm</keyword>
<keyword id="KW-0217">Developmental protein</keyword>
<keyword id="KW-0238">DNA-binding</keyword>
<keyword id="KW-0371">Homeobox</keyword>
<keyword id="KW-0488">Methylation</keyword>
<keyword id="KW-0539">Nucleus</keyword>
<keyword id="KW-1267">Proteomics identification</keyword>
<keyword id="KW-0656">Proto-oncogene</keyword>
<keyword id="KW-1185">Reference proteome</keyword>
<keyword id="KW-0804">Transcription</keyword>
<keyword id="KW-0805">Transcription regulation</keyword>
<reference key="1">
    <citation type="submission" date="1996-12" db="EMBL/GenBank/DDBJ databases">
        <authorList>
            <person name="Rozenfeld S."/>
            <person name="Sauvageau G."/>
            <person name="Largman C."/>
        </authorList>
    </citation>
    <scope>NUCLEOTIDE SEQUENCE [MRNA]</scope>
    <source>
        <tissue>Bone marrow</tissue>
    </source>
</reference>
<reference key="2">
    <citation type="journal article" date="1999" name="J. Biol. Chem.">
        <title>Endothelial cells express a novel, tumor necrosis factor-alpha-regulated variant of HOXA9.</title>
        <authorList>
            <person name="Patel C.V."/>
            <person name="Sharangpani R."/>
            <person name="Bandyopadhyay S."/>
            <person name="DiCorleto P.E."/>
        </authorList>
    </citation>
    <scope>NUCLEOTIDE SEQUENCE [GENOMIC DNA]</scope>
</reference>
<reference key="3">
    <citation type="submission" date="2004-10" db="EMBL/GenBank/DDBJ databases">
        <title>Cloning of human full-length CDSs in BD Creator(TM) system donor vector.</title>
        <authorList>
            <person name="Kalnine N."/>
            <person name="Chen X."/>
            <person name="Rolfs A."/>
            <person name="Halleck A."/>
            <person name="Hines L."/>
            <person name="Eisenstein S."/>
            <person name="Koundinya M."/>
            <person name="Raphael J."/>
            <person name="Moreira D."/>
            <person name="Kelley T."/>
            <person name="LaBaer J."/>
            <person name="Lin Y."/>
            <person name="Phelan M."/>
            <person name="Farmer A."/>
        </authorList>
    </citation>
    <scope>NUCLEOTIDE SEQUENCE [LARGE SCALE MRNA]</scope>
</reference>
<reference key="4">
    <citation type="journal article" date="2003" name="Nature">
        <title>The DNA sequence of human chromosome 7.</title>
        <authorList>
            <person name="Hillier L.W."/>
            <person name="Fulton R.S."/>
            <person name="Fulton L.A."/>
            <person name="Graves T.A."/>
            <person name="Pepin K.H."/>
            <person name="Wagner-McPherson C."/>
            <person name="Layman D."/>
            <person name="Maas J."/>
            <person name="Jaeger S."/>
            <person name="Walker R."/>
            <person name="Wylie K."/>
            <person name="Sekhon M."/>
            <person name="Becker M.C."/>
            <person name="O'Laughlin M.D."/>
            <person name="Schaller M.E."/>
            <person name="Fewell G.A."/>
            <person name="Delehaunty K.D."/>
            <person name="Miner T.L."/>
            <person name="Nash W.E."/>
            <person name="Cordes M."/>
            <person name="Du H."/>
            <person name="Sun H."/>
            <person name="Edwards J."/>
            <person name="Bradshaw-Cordum H."/>
            <person name="Ali J."/>
            <person name="Andrews S."/>
            <person name="Isak A."/>
            <person name="Vanbrunt A."/>
            <person name="Nguyen C."/>
            <person name="Du F."/>
            <person name="Lamar B."/>
            <person name="Courtney L."/>
            <person name="Kalicki J."/>
            <person name="Ozersky P."/>
            <person name="Bielicki L."/>
            <person name="Scott K."/>
            <person name="Holmes A."/>
            <person name="Harkins R."/>
            <person name="Harris A."/>
            <person name="Strong C.M."/>
            <person name="Hou S."/>
            <person name="Tomlinson C."/>
            <person name="Dauphin-Kohlberg S."/>
            <person name="Kozlowicz-Reilly A."/>
            <person name="Leonard S."/>
            <person name="Rohlfing T."/>
            <person name="Rock S.M."/>
            <person name="Tin-Wollam A.-M."/>
            <person name="Abbott A."/>
            <person name="Minx P."/>
            <person name="Maupin R."/>
            <person name="Strowmatt C."/>
            <person name="Latreille P."/>
            <person name="Miller N."/>
            <person name="Johnson D."/>
            <person name="Murray J."/>
            <person name="Woessner J.P."/>
            <person name="Wendl M.C."/>
            <person name="Yang S.-P."/>
            <person name="Schultz B.R."/>
            <person name="Wallis J.W."/>
            <person name="Spieth J."/>
            <person name="Bieri T.A."/>
            <person name="Nelson J.O."/>
            <person name="Berkowicz N."/>
            <person name="Wohldmann P.E."/>
            <person name="Cook L.L."/>
            <person name="Hickenbotham M.T."/>
            <person name="Eldred J."/>
            <person name="Williams D."/>
            <person name="Bedell J.A."/>
            <person name="Mardis E.R."/>
            <person name="Clifton S.W."/>
            <person name="Chissoe S.L."/>
            <person name="Marra M.A."/>
            <person name="Raymond C."/>
            <person name="Haugen E."/>
            <person name="Gillett W."/>
            <person name="Zhou Y."/>
            <person name="James R."/>
            <person name="Phelps K."/>
            <person name="Iadanoto S."/>
            <person name="Bubb K."/>
            <person name="Simms E."/>
            <person name="Levy R."/>
            <person name="Clendenning J."/>
            <person name="Kaul R."/>
            <person name="Kent W.J."/>
            <person name="Furey T.S."/>
            <person name="Baertsch R.A."/>
            <person name="Brent M.R."/>
            <person name="Keibler E."/>
            <person name="Flicek P."/>
            <person name="Bork P."/>
            <person name="Suyama M."/>
            <person name="Bailey J.A."/>
            <person name="Portnoy M.E."/>
            <person name="Torrents D."/>
            <person name="Chinwalla A.T."/>
            <person name="Gish W.R."/>
            <person name="Eddy S.R."/>
            <person name="McPherson J.D."/>
            <person name="Olson M.V."/>
            <person name="Eichler E.E."/>
            <person name="Green E.D."/>
            <person name="Waterston R.H."/>
            <person name="Wilson R.K."/>
        </authorList>
    </citation>
    <scope>NUCLEOTIDE SEQUENCE [LARGE SCALE GENOMIC DNA]</scope>
</reference>
<reference key="5">
    <citation type="journal article" date="2004" name="Genome Res.">
        <title>The status, quality, and expansion of the NIH full-length cDNA project: the Mammalian Gene Collection (MGC).</title>
        <authorList>
            <consortium name="The MGC Project Team"/>
        </authorList>
    </citation>
    <scope>NUCLEOTIDE SEQUENCE [LARGE SCALE MRNA]</scope>
    <source>
        <tissue>Colon</tissue>
    </source>
</reference>
<reference key="6">
    <citation type="journal article" date="1996" name="Nat. Genet.">
        <title>The t(7;11)(p15;p15) translocation in acute myeloid leukaemia fuses the genes for nucleoporin NUP98 and class I homeoprotein HOXA9.</title>
        <authorList>
            <person name="Borrow J."/>
            <person name="Shearman A.M."/>
            <person name="Stanton V.P."/>
            <person name="Becher R."/>
            <person name="Collins T."/>
            <person name="Williams A.J."/>
            <person name="Dube I."/>
            <person name="Katz F."/>
            <person name="Kwong Y.L."/>
            <person name="Morris C."/>
            <person name="Ohyashiki K."/>
            <person name="Toyama K."/>
            <person name="Rowley J."/>
            <person name="Housman D.E."/>
        </authorList>
    </citation>
    <scope>NUCLEOTIDE SEQUENCE [MRNA] OF 195-272</scope>
    <scope>CHROMOSOMAL TRANSLOCATION WITH NUP98</scope>
</reference>
<reference key="7">
    <citation type="journal article" date="1989" name="Nucleic Acids Res.">
        <title>The human HOX gene family.</title>
        <authorList>
            <person name="Acampora D."/>
            <person name="D'Esposito M."/>
            <person name="Faiella A."/>
            <person name="Pannese M."/>
            <person name="Migliaccio E."/>
            <person name="Morelli F."/>
            <person name="Stornaiuolo A."/>
            <person name="Nigro V."/>
            <person name="Simeone A."/>
            <person name="Boncinelli E."/>
        </authorList>
    </citation>
    <scope>NUCLEOTIDE SEQUENCE OF 206-271</scope>
</reference>
<reference key="8">
    <citation type="journal article" date="2005" name="Mol. Cell. Biol.">
        <title>Eukaryotic translation initiation factor 4E activity is modulated by HOXA9 at multiple levels.</title>
        <authorList>
            <person name="Topisirovic I."/>
            <person name="Kentsis A."/>
            <person name="Perez J.M."/>
            <person name="Guzman M.L."/>
            <person name="Jordan C.T."/>
            <person name="Borden K.L."/>
        </authorList>
    </citation>
    <scope>SUBCELLULAR LOCATION</scope>
</reference>
<reference key="9">
    <citation type="journal article" date="2003" name="Cancer Res.">
        <title>A novel gene, MSI2, encoding a putative RNA-binding protein is recurrently rearranged at disease progression of chronic myeloid leukemia and forms a fusion gene with HOXA9 as a result of the cryptic t(7;17)(p15;q23).</title>
        <authorList>
            <person name="Barbouti A."/>
            <person name="Hoeglund M."/>
            <person name="Johansson B."/>
            <person name="Lassen C."/>
            <person name="Nilsson P.-G."/>
            <person name="Hagemeijer A."/>
            <person name="Mitelman F."/>
            <person name="Fioretos T."/>
        </authorList>
    </citation>
    <scope>CHROMOSOMAL TRANSLOCATION WITH MSI2</scope>
</reference>
<reference key="10">
    <citation type="journal article" date="2012" name="Mol. Cell. Biol.">
        <title>HOXA9 methylation by PRMT5 is essential for endothelial cell expression of leukocyte adhesion molecules.</title>
        <authorList>
            <person name="Bandyopadhyay S."/>
            <person name="Harris D.P."/>
            <person name="Adams G.N."/>
            <person name="Lause G.E."/>
            <person name="McHugh A."/>
            <person name="Tillmaand E.G."/>
            <person name="Money A."/>
            <person name="Willard B."/>
            <person name="Fox P.L."/>
            <person name="Dicorleto P.E."/>
        </authorList>
    </citation>
    <scope>FUNCTION</scope>
    <scope>INTERACTION WITH PRMT5</scope>
    <scope>METHYLATION AT ARG-140</scope>
    <scope>MUTAGENESIS OF ARG-140</scope>
    <scope>IDENTIFICATION BY MASS SPECTROMETRY</scope>
</reference>
<reference key="11">
    <citation type="journal article" date="1996" name="Nat. Genet.">
        <title>Fusion of the nucleoporin gene NUP98 to HOXA9 by the chromosome translocation t(7;11)(p15;p15) in human myeloid leukaemia.</title>
        <authorList>
            <person name="Nakamura T."/>
            <person name="Largaespada D.A."/>
            <person name="Lee M.P."/>
            <person name="Johnson L.A."/>
            <person name="Ohyashiki K."/>
            <person name="Toyama K."/>
            <person name="Chen S.J."/>
            <person name="Willman C.L."/>
            <person name="Chen I.M."/>
            <person name="Feinberg A.P."/>
            <person name="Jenkins N.A."/>
            <person name="Copeland N.G."/>
            <person name="Shaughnessy J.D. Jr."/>
        </authorList>
    </citation>
    <scope>DISEASE</scope>
    <scope>CHROMOSOMAL TRANSLOCATION WITH NUP98</scope>
</reference>
<reference key="12">
    <citation type="journal article" date="2021" name="Nature">
        <title>Phase separation drives aberrant chromatin looping and cancer development.</title>
        <authorList>
            <person name="Ahn J.H."/>
            <person name="Davis E.S."/>
            <person name="Daugird T.A."/>
            <person name="Zhao S."/>
            <person name="Quiroga I.Y."/>
            <person name="Uryu H."/>
            <person name="Li J."/>
            <person name="Storey A.J."/>
            <person name="Tsai Y.H."/>
            <person name="Keeley D.P."/>
            <person name="Mackintosh S.G."/>
            <person name="Edmondson R.D."/>
            <person name="Byrum S.D."/>
            <person name="Cai L."/>
            <person name="Tackett A.J."/>
            <person name="Zheng D."/>
            <person name="Legant W.R."/>
            <person name="Phanstiel D.H."/>
            <person name="Wang G.G."/>
        </authorList>
    </citation>
    <scope>CHARACTERIZATION OF CHROMOSOMAL TRANSLOCATION WITH NUP98</scope>
</reference>